<comment type="function">
    <text evidence="1">Transfers the gamma-phosphate of ATP to the 4'-position of a tetraacyldisaccharide 1-phosphate intermediate (termed DS-1-P) to form tetraacyldisaccharide 1,4'-bis-phosphate (lipid IVA).</text>
</comment>
<comment type="catalytic activity">
    <reaction evidence="1">
        <text>a lipid A disaccharide + ATP = a lipid IVA + ADP + H(+)</text>
        <dbReference type="Rhea" id="RHEA:67840"/>
        <dbReference type="ChEBI" id="CHEBI:15378"/>
        <dbReference type="ChEBI" id="CHEBI:30616"/>
        <dbReference type="ChEBI" id="CHEBI:176343"/>
        <dbReference type="ChEBI" id="CHEBI:176425"/>
        <dbReference type="ChEBI" id="CHEBI:456216"/>
        <dbReference type="EC" id="2.7.1.130"/>
    </reaction>
</comment>
<comment type="pathway">
    <text evidence="1">Glycolipid biosynthesis; lipid IV(A) biosynthesis; lipid IV(A) from (3R)-3-hydroxytetradecanoyl-[acyl-carrier-protein] and UDP-N-acetyl-alpha-D-glucosamine: step 6/6.</text>
</comment>
<comment type="similarity">
    <text evidence="1">Belongs to the LpxK family.</text>
</comment>
<evidence type="ECO:0000255" key="1">
    <source>
        <dbReference type="HAMAP-Rule" id="MF_00409"/>
    </source>
</evidence>
<dbReference type="EC" id="2.7.1.130" evidence="1"/>
<dbReference type="EMBL" id="CP000857">
    <property type="protein sequence ID" value="ACN45152.1"/>
    <property type="molecule type" value="Genomic_DNA"/>
</dbReference>
<dbReference type="RefSeq" id="WP_000561679.1">
    <property type="nucleotide sequence ID" value="NC_012125.1"/>
</dbReference>
<dbReference type="SMR" id="C0PXV2"/>
<dbReference type="KEGG" id="sei:SPC_0986"/>
<dbReference type="HOGENOM" id="CLU_038816_2_0_6"/>
<dbReference type="UniPathway" id="UPA00359">
    <property type="reaction ID" value="UER00482"/>
</dbReference>
<dbReference type="Proteomes" id="UP000001599">
    <property type="component" value="Chromosome"/>
</dbReference>
<dbReference type="GO" id="GO:0005886">
    <property type="term" value="C:plasma membrane"/>
    <property type="evidence" value="ECO:0007669"/>
    <property type="project" value="TreeGrafter"/>
</dbReference>
<dbReference type="GO" id="GO:0005524">
    <property type="term" value="F:ATP binding"/>
    <property type="evidence" value="ECO:0007669"/>
    <property type="project" value="UniProtKB-UniRule"/>
</dbReference>
<dbReference type="GO" id="GO:0009029">
    <property type="term" value="F:tetraacyldisaccharide 4'-kinase activity"/>
    <property type="evidence" value="ECO:0007669"/>
    <property type="project" value="UniProtKB-UniRule"/>
</dbReference>
<dbReference type="GO" id="GO:0009245">
    <property type="term" value="P:lipid A biosynthetic process"/>
    <property type="evidence" value="ECO:0007669"/>
    <property type="project" value="UniProtKB-UniRule"/>
</dbReference>
<dbReference type="GO" id="GO:0009244">
    <property type="term" value="P:lipopolysaccharide core region biosynthetic process"/>
    <property type="evidence" value="ECO:0007669"/>
    <property type="project" value="TreeGrafter"/>
</dbReference>
<dbReference type="HAMAP" id="MF_00409">
    <property type="entry name" value="LpxK"/>
    <property type="match status" value="1"/>
</dbReference>
<dbReference type="InterPro" id="IPR003758">
    <property type="entry name" value="LpxK"/>
</dbReference>
<dbReference type="InterPro" id="IPR027417">
    <property type="entry name" value="P-loop_NTPase"/>
</dbReference>
<dbReference type="NCBIfam" id="TIGR00682">
    <property type="entry name" value="lpxK"/>
    <property type="match status" value="1"/>
</dbReference>
<dbReference type="PANTHER" id="PTHR42724">
    <property type="entry name" value="TETRAACYLDISACCHARIDE 4'-KINASE"/>
    <property type="match status" value="1"/>
</dbReference>
<dbReference type="PANTHER" id="PTHR42724:SF1">
    <property type="entry name" value="TETRAACYLDISACCHARIDE 4'-KINASE, MITOCHONDRIAL-RELATED"/>
    <property type="match status" value="1"/>
</dbReference>
<dbReference type="Pfam" id="PF02606">
    <property type="entry name" value="LpxK"/>
    <property type="match status" value="1"/>
</dbReference>
<dbReference type="SUPFAM" id="SSF52540">
    <property type="entry name" value="P-loop containing nucleoside triphosphate hydrolases"/>
    <property type="match status" value="1"/>
</dbReference>
<proteinExistence type="inferred from homology"/>
<protein>
    <recommendedName>
        <fullName evidence="1">Tetraacyldisaccharide 4'-kinase</fullName>
        <ecNumber evidence="1">2.7.1.130</ecNumber>
    </recommendedName>
    <alternativeName>
        <fullName evidence="1">Lipid A 4'-kinase</fullName>
    </alternativeName>
</protein>
<name>LPXK_SALPC</name>
<reference key="1">
    <citation type="journal article" date="2009" name="PLoS ONE">
        <title>Salmonella paratyphi C: genetic divergence from Salmonella choleraesuis and pathogenic convergence with Salmonella typhi.</title>
        <authorList>
            <person name="Liu W.-Q."/>
            <person name="Feng Y."/>
            <person name="Wang Y."/>
            <person name="Zou Q.-H."/>
            <person name="Chen F."/>
            <person name="Guo J.-T."/>
            <person name="Peng Y.-H."/>
            <person name="Jin Y."/>
            <person name="Li Y.-G."/>
            <person name="Hu S.-N."/>
            <person name="Johnston R.N."/>
            <person name="Liu G.-R."/>
            <person name="Liu S.-L."/>
        </authorList>
    </citation>
    <scope>NUCLEOTIDE SEQUENCE [LARGE SCALE GENOMIC DNA]</scope>
    <source>
        <strain>RKS4594</strain>
    </source>
</reference>
<keyword id="KW-0067">ATP-binding</keyword>
<keyword id="KW-0418">Kinase</keyword>
<keyword id="KW-0441">Lipid A biosynthesis</keyword>
<keyword id="KW-0444">Lipid biosynthesis</keyword>
<keyword id="KW-0443">Lipid metabolism</keyword>
<keyword id="KW-0547">Nucleotide-binding</keyword>
<keyword id="KW-0808">Transferase</keyword>
<accession>C0PXV2</accession>
<organism>
    <name type="scientific">Salmonella paratyphi C (strain RKS4594)</name>
    <dbReference type="NCBI Taxonomy" id="476213"/>
    <lineage>
        <taxon>Bacteria</taxon>
        <taxon>Pseudomonadati</taxon>
        <taxon>Pseudomonadota</taxon>
        <taxon>Gammaproteobacteria</taxon>
        <taxon>Enterobacterales</taxon>
        <taxon>Enterobacteriaceae</taxon>
        <taxon>Salmonella</taxon>
    </lineage>
</organism>
<sequence length="325" mass="34996">MIARIWSGESPLWRLLLPLSWLYGLVSGAIRLSYKLGFKRAWRAPVPVVVVGNLTAGGNGKTPVVIWLVEKLQQRGVRVGVVSRGYGGKAAAYPLLLTPETTTAEAGDEPVLIYQRTGAPVAVAPERAAAVKAILAAHNVQIIITDDGLQHYRLARDIEIVVIDGVRRFGNGWWLPAGPMRERASRLKTVDAAIVNGGVARAGEIPMQLAPGLAVNLRTGARCDVAQLSNIVAMAGIGHPPRFFATLEACGAHPQKCVPLADHQTLAPADVQALVGEGQTLVMTEKDAVKCRAFAEDNWWFLPVDARLSGEQPDKLLEHITSLVR</sequence>
<gene>
    <name evidence="1" type="primary">lpxK</name>
    <name type="ordered locus">SPC_0986</name>
</gene>
<feature type="chain" id="PRO_1000134751" description="Tetraacyldisaccharide 4'-kinase">
    <location>
        <begin position="1"/>
        <end position="325"/>
    </location>
</feature>
<feature type="binding site" evidence="1">
    <location>
        <begin position="55"/>
        <end position="62"/>
    </location>
    <ligand>
        <name>ATP</name>
        <dbReference type="ChEBI" id="CHEBI:30616"/>
    </ligand>
</feature>